<accession>P63520</accession>
<accession>A0A1R3Y4K9</accession>
<accession>Q10968</accession>
<accession>X2BMS9</accession>
<feature type="chain" id="PRO_0000139759" description="Ammonium transporter">
    <location>
        <begin position="1"/>
        <end position="477"/>
    </location>
</feature>
<feature type="transmembrane region" description="Helical" evidence="2">
    <location>
        <begin position="16"/>
        <end position="36"/>
    </location>
</feature>
<feature type="transmembrane region" description="Helical" evidence="2">
    <location>
        <begin position="53"/>
        <end position="73"/>
    </location>
</feature>
<feature type="transmembrane region" description="Helical" evidence="2">
    <location>
        <begin position="121"/>
        <end position="141"/>
    </location>
</feature>
<feature type="transmembrane region" description="Helical" evidence="2">
    <location>
        <begin position="150"/>
        <end position="170"/>
    </location>
</feature>
<feature type="transmembrane region" description="Helical" evidence="2">
    <location>
        <begin position="192"/>
        <end position="212"/>
    </location>
</feature>
<feature type="transmembrane region" description="Helical" evidence="2">
    <location>
        <begin position="229"/>
        <end position="249"/>
    </location>
</feature>
<feature type="transmembrane region" description="Helical" evidence="2">
    <location>
        <begin position="257"/>
        <end position="277"/>
    </location>
</feature>
<feature type="transmembrane region" description="Helical" evidence="2">
    <location>
        <begin position="290"/>
        <end position="310"/>
    </location>
</feature>
<feature type="transmembrane region" description="Helical" evidence="2">
    <location>
        <begin position="312"/>
        <end position="332"/>
    </location>
</feature>
<feature type="transmembrane region" description="Helical" evidence="2">
    <location>
        <begin position="344"/>
        <end position="364"/>
    </location>
</feature>
<feature type="transmembrane region" description="Helical" evidence="2">
    <location>
        <begin position="394"/>
        <end position="414"/>
    </location>
</feature>
<feature type="region of interest" description="Disordered" evidence="3">
    <location>
        <begin position="457"/>
        <end position="477"/>
    </location>
</feature>
<feature type="compositionally biased region" description="Basic and acidic residues" evidence="3">
    <location>
        <begin position="468"/>
        <end position="477"/>
    </location>
</feature>
<reference key="1">
    <citation type="journal article" date="2003" name="Proc. Natl. Acad. Sci. U.S.A.">
        <title>The complete genome sequence of Mycobacterium bovis.</title>
        <authorList>
            <person name="Garnier T."/>
            <person name="Eiglmeier K."/>
            <person name="Camus J.-C."/>
            <person name="Medina N."/>
            <person name="Mansoor H."/>
            <person name="Pryor M."/>
            <person name="Duthoy S."/>
            <person name="Grondin S."/>
            <person name="Lacroix C."/>
            <person name="Monsempe C."/>
            <person name="Simon S."/>
            <person name="Harris B."/>
            <person name="Atkin R."/>
            <person name="Doggett J."/>
            <person name="Mayes R."/>
            <person name="Keating L."/>
            <person name="Wheeler P.R."/>
            <person name="Parkhill J."/>
            <person name="Barrell B.G."/>
            <person name="Cole S.T."/>
            <person name="Gordon S.V."/>
            <person name="Hewinson R.G."/>
        </authorList>
    </citation>
    <scope>NUCLEOTIDE SEQUENCE [LARGE SCALE GENOMIC DNA]</scope>
    <source>
        <strain>ATCC BAA-935 / AF2122/97</strain>
    </source>
</reference>
<reference key="2">
    <citation type="journal article" date="2017" name="Genome Announc.">
        <title>Updated reference genome sequence and annotation of Mycobacterium bovis AF2122/97.</title>
        <authorList>
            <person name="Malone K.M."/>
            <person name="Farrell D."/>
            <person name="Stuber T.P."/>
            <person name="Schubert O.T."/>
            <person name="Aebersold R."/>
            <person name="Robbe-Austerman S."/>
            <person name="Gordon S.V."/>
        </authorList>
    </citation>
    <scope>NUCLEOTIDE SEQUENCE [LARGE SCALE GENOMIC DNA]</scope>
    <scope>GENOME REANNOTATION</scope>
    <source>
        <strain>ATCC BAA-935 / AF2122/97</strain>
    </source>
</reference>
<keyword id="KW-0924">Ammonia transport</keyword>
<keyword id="KW-1003">Cell membrane</keyword>
<keyword id="KW-0472">Membrane</keyword>
<keyword id="KW-1185">Reference proteome</keyword>
<keyword id="KW-0812">Transmembrane</keyword>
<keyword id="KW-1133">Transmembrane helix</keyword>
<keyword id="KW-0813">Transport</keyword>
<sequence length="477" mass="49241">MDQFPIMGVPDGGDTAWMLVSSALVLLMTPGLAFFYGGMVRSKSVLNMIMMSISAMGVVTVLWALYGYSIAFGDDVGNIAGNPSQYWGLKGLIGVNAVAADPSTQTAAVNIPLAGTLPATVFVAFQLMFAIITVALISGAVADRLKFGAWLLFAGLWATFVYFPVAHWVFAFDGFAAEHGGWIANKLHAIDFAGGTAVHINAGVAALMLAIVLGKRRGWPATLFRPHNLPFVMLGAALLWFGWYGFNAGSATTANGVAGATFVTTTIATAAAMLGWLLTERVRDGKATTLGAASGIVAGLVAITPSCSSVNVLGALAVGVSAGVLCALAVGLKFKLGFDDSLDVVGVHLVGGLVGTLLVGLLAAPEAPAINGVAGVSKGLFYGGGFAQLERQALGACSVLVYSGIITLILALILKFTIGLRLDAEQESTGIDEAEHAESGYDFAVASGSVLPPRVTVEDSRNGIQERIGQKVEAEPK</sequence>
<proteinExistence type="inferred from homology"/>
<dbReference type="EMBL" id="LT708304">
    <property type="protein sequence ID" value="SIU01565.1"/>
    <property type="molecule type" value="Genomic_DNA"/>
</dbReference>
<dbReference type="RefSeq" id="NP_856589.1">
    <property type="nucleotide sequence ID" value="NC_002945.3"/>
</dbReference>
<dbReference type="RefSeq" id="WP_003899540.1">
    <property type="nucleotide sequence ID" value="NC_002945.4"/>
</dbReference>
<dbReference type="SMR" id="P63520"/>
<dbReference type="KEGG" id="mbo:BQ2027_MB2944C"/>
<dbReference type="PATRIC" id="fig|233413.5.peg.3230"/>
<dbReference type="Proteomes" id="UP000001419">
    <property type="component" value="Chromosome"/>
</dbReference>
<dbReference type="GO" id="GO:0005886">
    <property type="term" value="C:plasma membrane"/>
    <property type="evidence" value="ECO:0007669"/>
    <property type="project" value="UniProtKB-SubCell"/>
</dbReference>
<dbReference type="GO" id="GO:0008519">
    <property type="term" value="F:ammonium channel activity"/>
    <property type="evidence" value="ECO:0007669"/>
    <property type="project" value="InterPro"/>
</dbReference>
<dbReference type="FunFam" id="1.10.3430.10:FF:000007">
    <property type="entry name" value="Ammonium transporter"/>
    <property type="match status" value="1"/>
</dbReference>
<dbReference type="Gene3D" id="1.10.3430.10">
    <property type="entry name" value="Ammonium transporter AmtB like domains"/>
    <property type="match status" value="1"/>
</dbReference>
<dbReference type="InterPro" id="IPR029020">
    <property type="entry name" value="Ammonium/urea_transptr"/>
</dbReference>
<dbReference type="InterPro" id="IPR001905">
    <property type="entry name" value="Ammonium_transpt"/>
</dbReference>
<dbReference type="InterPro" id="IPR018047">
    <property type="entry name" value="Ammonium_transpt_CS"/>
</dbReference>
<dbReference type="InterPro" id="IPR024041">
    <property type="entry name" value="NH4_transpt_AmtB-like_dom"/>
</dbReference>
<dbReference type="NCBIfam" id="TIGR00836">
    <property type="entry name" value="amt"/>
    <property type="match status" value="1"/>
</dbReference>
<dbReference type="PANTHER" id="PTHR43029">
    <property type="entry name" value="AMMONIUM TRANSPORTER MEP2"/>
    <property type="match status" value="1"/>
</dbReference>
<dbReference type="PANTHER" id="PTHR43029:SF10">
    <property type="entry name" value="AMMONIUM TRANSPORTER MEP2"/>
    <property type="match status" value="1"/>
</dbReference>
<dbReference type="Pfam" id="PF00909">
    <property type="entry name" value="Ammonium_transp"/>
    <property type="match status" value="1"/>
</dbReference>
<dbReference type="SUPFAM" id="SSF111352">
    <property type="entry name" value="Ammonium transporter"/>
    <property type="match status" value="1"/>
</dbReference>
<dbReference type="PROSITE" id="PS01219">
    <property type="entry name" value="AMMONIUM_TRANSP"/>
    <property type="match status" value="1"/>
</dbReference>
<comment type="function">
    <text evidence="1">Involved in the uptake of ammonium/ammonia (NH(4)(+)/NH(3)).</text>
</comment>
<comment type="subunit">
    <text evidence="1">Homotrimer.</text>
</comment>
<comment type="subcellular location">
    <subcellularLocation>
        <location evidence="4">Cell membrane</location>
        <topology evidence="4">Multi-pass membrane protein</topology>
    </subcellularLocation>
</comment>
<comment type="similarity">
    <text evidence="4">Belongs to the ammonia transporter channel (TC 1.A.11.2) family.</text>
</comment>
<evidence type="ECO:0000250" key="1">
    <source>
        <dbReference type="UniProtKB" id="P69681"/>
    </source>
</evidence>
<evidence type="ECO:0000255" key="2"/>
<evidence type="ECO:0000256" key="3">
    <source>
        <dbReference type="SAM" id="MobiDB-lite"/>
    </source>
</evidence>
<evidence type="ECO:0000305" key="4"/>
<organism>
    <name type="scientific">Mycobacterium bovis (strain ATCC BAA-935 / AF2122/97)</name>
    <dbReference type="NCBI Taxonomy" id="233413"/>
    <lineage>
        <taxon>Bacteria</taxon>
        <taxon>Bacillati</taxon>
        <taxon>Actinomycetota</taxon>
        <taxon>Actinomycetes</taxon>
        <taxon>Mycobacteriales</taxon>
        <taxon>Mycobacteriaceae</taxon>
        <taxon>Mycobacterium</taxon>
        <taxon>Mycobacterium tuberculosis complex</taxon>
    </lineage>
</organism>
<name>AMT_MYCBO</name>
<protein>
    <recommendedName>
        <fullName evidence="1">Ammonium transporter</fullName>
    </recommendedName>
    <alternativeName>
        <fullName evidence="1">Ammonia channel</fullName>
    </alternativeName>
    <alternativeName>
        <fullName evidence="1">Ammonium channel</fullName>
    </alternativeName>
</protein>
<gene>
    <name type="primary">amt</name>
    <name type="ordered locus">BQ2027_MB2944C</name>
</gene>